<protein>
    <recommendedName>
        <fullName evidence="1">NAD kinase</fullName>
        <ecNumber evidence="1">2.7.1.23</ecNumber>
    </recommendedName>
    <alternativeName>
        <fullName evidence="1">ATP-dependent NAD kinase</fullName>
    </alternativeName>
</protein>
<gene>
    <name evidence="1" type="primary">nadK</name>
    <name type="ordered locus">Lxx05620</name>
</gene>
<feature type="chain" id="PRO_0000120627" description="NAD kinase">
    <location>
        <begin position="1"/>
        <end position="304"/>
    </location>
</feature>
<feature type="active site" description="Proton acceptor" evidence="1">
    <location>
        <position position="77"/>
    </location>
</feature>
<feature type="binding site" evidence="1">
    <location>
        <begin position="77"/>
        <end position="78"/>
    </location>
    <ligand>
        <name>NAD(+)</name>
        <dbReference type="ChEBI" id="CHEBI:57540"/>
    </ligand>
</feature>
<feature type="binding site" evidence="1">
    <location>
        <position position="82"/>
    </location>
    <ligand>
        <name>NAD(+)</name>
        <dbReference type="ChEBI" id="CHEBI:57540"/>
    </ligand>
</feature>
<feature type="binding site" evidence="1">
    <location>
        <begin position="151"/>
        <end position="152"/>
    </location>
    <ligand>
        <name>NAD(+)</name>
        <dbReference type="ChEBI" id="CHEBI:57540"/>
    </ligand>
</feature>
<feature type="binding site" evidence="1">
    <location>
        <position position="162"/>
    </location>
    <ligand>
        <name>NAD(+)</name>
        <dbReference type="ChEBI" id="CHEBI:57540"/>
    </ligand>
</feature>
<feature type="binding site" evidence="1">
    <location>
        <position position="181"/>
    </location>
    <ligand>
        <name>NAD(+)</name>
        <dbReference type="ChEBI" id="CHEBI:57540"/>
    </ligand>
</feature>
<feature type="binding site" evidence="1">
    <location>
        <begin position="192"/>
        <end position="197"/>
    </location>
    <ligand>
        <name>NAD(+)</name>
        <dbReference type="ChEBI" id="CHEBI:57540"/>
    </ligand>
</feature>
<evidence type="ECO:0000255" key="1">
    <source>
        <dbReference type="HAMAP-Rule" id="MF_00361"/>
    </source>
</evidence>
<sequence>MAAQRYILVVAHTGRRDSLAAGVSVCRQLLAAGVVPVLSEGERRDLLAAEPELATVVALGAEVPPAELELVIVLGGDGTILRAAELVRGCPAPLLGVNLGHVGFLAESERDDLETAVARGLAKDYEVEERMTLSARVKVGEEVVYESWALNEATVEKANRERVLEVVIEADGRPMSSFGCDGVVMSTPTGSTAYSFSAGGPVVWPGVAALLLVPLSAHALFSRPLVVDADSSLAVELLEGAGGEGVLWCDGRRAFDLPRGARVVVRRSPIPVRLARLHPGPFTDRLVRKFTLPVTGWRGPDGRD</sequence>
<comment type="function">
    <text evidence="1">Involved in the regulation of the intracellular balance of NAD and NADP, and is a key enzyme in the biosynthesis of NADP. Catalyzes specifically the phosphorylation on 2'-hydroxyl of the adenosine moiety of NAD to yield NADP.</text>
</comment>
<comment type="catalytic activity">
    <reaction evidence="1">
        <text>NAD(+) + ATP = ADP + NADP(+) + H(+)</text>
        <dbReference type="Rhea" id="RHEA:18629"/>
        <dbReference type="ChEBI" id="CHEBI:15378"/>
        <dbReference type="ChEBI" id="CHEBI:30616"/>
        <dbReference type="ChEBI" id="CHEBI:57540"/>
        <dbReference type="ChEBI" id="CHEBI:58349"/>
        <dbReference type="ChEBI" id="CHEBI:456216"/>
        <dbReference type="EC" id="2.7.1.23"/>
    </reaction>
</comment>
<comment type="cofactor">
    <cofactor evidence="1">
        <name>a divalent metal cation</name>
        <dbReference type="ChEBI" id="CHEBI:60240"/>
    </cofactor>
</comment>
<comment type="subcellular location">
    <subcellularLocation>
        <location evidence="1">Cytoplasm</location>
    </subcellularLocation>
</comment>
<comment type="similarity">
    <text evidence="1">Belongs to the NAD kinase family.</text>
</comment>
<name>NADK_LEIXX</name>
<dbReference type="EC" id="2.7.1.23" evidence="1"/>
<dbReference type="EMBL" id="AE016822">
    <property type="protein sequence ID" value="AAT88528.1"/>
    <property type="molecule type" value="Genomic_DNA"/>
</dbReference>
<dbReference type="RefSeq" id="WP_011185528.1">
    <property type="nucleotide sequence ID" value="NC_006087.1"/>
</dbReference>
<dbReference type="SMR" id="Q6AGG7"/>
<dbReference type="STRING" id="281090.Lxx05620"/>
<dbReference type="KEGG" id="lxx:Lxx05620"/>
<dbReference type="eggNOG" id="COG0061">
    <property type="taxonomic scope" value="Bacteria"/>
</dbReference>
<dbReference type="HOGENOM" id="CLU_008831_0_0_11"/>
<dbReference type="Proteomes" id="UP000001306">
    <property type="component" value="Chromosome"/>
</dbReference>
<dbReference type="GO" id="GO:0005737">
    <property type="term" value="C:cytoplasm"/>
    <property type="evidence" value="ECO:0007669"/>
    <property type="project" value="UniProtKB-SubCell"/>
</dbReference>
<dbReference type="GO" id="GO:0005524">
    <property type="term" value="F:ATP binding"/>
    <property type="evidence" value="ECO:0007669"/>
    <property type="project" value="UniProtKB-KW"/>
</dbReference>
<dbReference type="GO" id="GO:0046872">
    <property type="term" value="F:metal ion binding"/>
    <property type="evidence" value="ECO:0007669"/>
    <property type="project" value="UniProtKB-UniRule"/>
</dbReference>
<dbReference type="GO" id="GO:0051287">
    <property type="term" value="F:NAD binding"/>
    <property type="evidence" value="ECO:0007669"/>
    <property type="project" value="UniProtKB-ARBA"/>
</dbReference>
<dbReference type="GO" id="GO:0003951">
    <property type="term" value="F:NAD+ kinase activity"/>
    <property type="evidence" value="ECO:0007669"/>
    <property type="project" value="UniProtKB-UniRule"/>
</dbReference>
<dbReference type="GO" id="GO:0019674">
    <property type="term" value="P:NAD metabolic process"/>
    <property type="evidence" value="ECO:0007669"/>
    <property type="project" value="InterPro"/>
</dbReference>
<dbReference type="GO" id="GO:0006741">
    <property type="term" value="P:NADP biosynthetic process"/>
    <property type="evidence" value="ECO:0007669"/>
    <property type="project" value="UniProtKB-UniRule"/>
</dbReference>
<dbReference type="FunFam" id="2.60.200.30:FF:000007">
    <property type="entry name" value="NAD kinase"/>
    <property type="match status" value="1"/>
</dbReference>
<dbReference type="Gene3D" id="3.40.50.10330">
    <property type="entry name" value="Probable inorganic polyphosphate/atp-NAD kinase, domain 1"/>
    <property type="match status" value="1"/>
</dbReference>
<dbReference type="Gene3D" id="2.60.200.30">
    <property type="entry name" value="Probable inorganic polyphosphate/atp-NAD kinase, domain 2"/>
    <property type="match status" value="1"/>
</dbReference>
<dbReference type="HAMAP" id="MF_00361">
    <property type="entry name" value="NAD_kinase"/>
    <property type="match status" value="1"/>
</dbReference>
<dbReference type="InterPro" id="IPR017438">
    <property type="entry name" value="ATP-NAD_kinase_N"/>
</dbReference>
<dbReference type="InterPro" id="IPR017437">
    <property type="entry name" value="ATP-NAD_kinase_PpnK-typ_C"/>
</dbReference>
<dbReference type="InterPro" id="IPR016064">
    <property type="entry name" value="NAD/diacylglycerol_kinase_sf"/>
</dbReference>
<dbReference type="InterPro" id="IPR002504">
    <property type="entry name" value="NADK"/>
</dbReference>
<dbReference type="NCBIfam" id="NF002892">
    <property type="entry name" value="PRK03372.1"/>
    <property type="match status" value="1"/>
</dbReference>
<dbReference type="PANTHER" id="PTHR20275">
    <property type="entry name" value="NAD KINASE"/>
    <property type="match status" value="1"/>
</dbReference>
<dbReference type="PANTHER" id="PTHR20275:SF0">
    <property type="entry name" value="NAD KINASE"/>
    <property type="match status" value="1"/>
</dbReference>
<dbReference type="Pfam" id="PF01513">
    <property type="entry name" value="NAD_kinase"/>
    <property type="match status" value="1"/>
</dbReference>
<dbReference type="Pfam" id="PF20143">
    <property type="entry name" value="NAD_kinase_C"/>
    <property type="match status" value="1"/>
</dbReference>
<dbReference type="SUPFAM" id="SSF111331">
    <property type="entry name" value="NAD kinase/diacylglycerol kinase-like"/>
    <property type="match status" value="1"/>
</dbReference>
<keyword id="KW-0067">ATP-binding</keyword>
<keyword id="KW-0963">Cytoplasm</keyword>
<keyword id="KW-0418">Kinase</keyword>
<keyword id="KW-0520">NAD</keyword>
<keyword id="KW-0521">NADP</keyword>
<keyword id="KW-0547">Nucleotide-binding</keyword>
<keyword id="KW-1185">Reference proteome</keyword>
<keyword id="KW-0808">Transferase</keyword>
<accession>Q6AGG7</accession>
<organism>
    <name type="scientific">Leifsonia xyli subsp. xyli (strain CTCB07)</name>
    <dbReference type="NCBI Taxonomy" id="281090"/>
    <lineage>
        <taxon>Bacteria</taxon>
        <taxon>Bacillati</taxon>
        <taxon>Actinomycetota</taxon>
        <taxon>Actinomycetes</taxon>
        <taxon>Micrococcales</taxon>
        <taxon>Microbacteriaceae</taxon>
        <taxon>Leifsonia</taxon>
    </lineage>
</organism>
<reference key="1">
    <citation type="journal article" date="2004" name="Mol. Plant Microbe Interact.">
        <title>The genome sequence of the Gram-positive sugarcane pathogen Leifsonia xyli subsp. xyli.</title>
        <authorList>
            <person name="Monteiro-Vitorello C.B."/>
            <person name="Camargo L.E.A."/>
            <person name="Van Sluys M.A."/>
            <person name="Kitajima J.P."/>
            <person name="Truffi D."/>
            <person name="do Amaral A.M."/>
            <person name="Harakava R."/>
            <person name="de Oliveira J.C.F."/>
            <person name="Wood D."/>
            <person name="de Oliveira M.C."/>
            <person name="Miyaki C.Y."/>
            <person name="Takita M.A."/>
            <person name="da Silva A.C.R."/>
            <person name="Furlan L.R."/>
            <person name="Carraro D.M."/>
            <person name="Camarotte G."/>
            <person name="Almeida N.F. Jr."/>
            <person name="Carrer H."/>
            <person name="Coutinho L.L."/>
            <person name="El-Dorry H.A."/>
            <person name="Ferro M.I.T."/>
            <person name="Gagliardi P.R."/>
            <person name="Giglioti E."/>
            <person name="Goldman M.H.S."/>
            <person name="Goldman G.H."/>
            <person name="Kimura E.T."/>
            <person name="Ferro E.S."/>
            <person name="Kuramae E.E."/>
            <person name="Lemos E.G.M."/>
            <person name="Lemos M.V.F."/>
            <person name="Mauro S.M.Z."/>
            <person name="Machado M.A."/>
            <person name="Marino C.L."/>
            <person name="Menck C.F."/>
            <person name="Nunes L.R."/>
            <person name="Oliveira R.C."/>
            <person name="Pereira G.G."/>
            <person name="Siqueira W."/>
            <person name="de Souza A.A."/>
            <person name="Tsai S.M."/>
            <person name="Zanca A.S."/>
            <person name="Simpson A.J.G."/>
            <person name="Brumbley S.M."/>
            <person name="Setubal J.C."/>
        </authorList>
    </citation>
    <scope>NUCLEOTIDE SEQUENCE [LARGE SCALE GENOMIC DNA]</scope>
    <source>
        <strain>CTCB07</strain>
    </source>
</reference>
<proteinExistence type="inferred from homology"/>